<accession>B4SZR0</accession>
<dbReference type="EC" id="4.2.1.17" evidence="1"/>
<dbReference type="EC" id="5.1.2.3" evidence="1"/>
<dbReference type="EC" id="1.1.1.35" evidence="1"/>
<dbReference type="EMBL" id="CP001113">
    <property type="protein sequence ID" value="ACF61357.1"/>
    <property type="molecule type" value="Genomic_DNA"/>
</dbReference>
<dbReference type="RefSeq" id="WP_000214147.1">
    <property type="nucleotide sequence ID" value="NZ_CCMR01000001.1"/>
</dbReference>
<dbReference type="SMR" id="B4SZR0"/>
<dbReference type="KEGG" id="see:SNSL254_A2577"/>
<dbReference type="HOGENOM" id="CLU_009834_16_3_6"/>
<dbReference type="UniPathway" id="UPA00659"/>
<dbReference type="Proteomes" id="UP000008824">
    <property type="component" value="Chromosome"/>
</dbReference>
<dbReference type="GO" id="GO:0005737">
    <property type="term" value="C:cytoplasm"/>
    <property type="evidence" value="ECO:0007669"/>
    <property type="project" value="UniProtKB-SubCell"/>
</dbReference>
<dbReference type="GO" id="GO:0008692">
    <property type="term" value="F:3-hydroxybutyryl-CoA epimerase activity"/>
    <property type="evidence" value="ECO:0007669"/>
    <property type="project" value="UniProtKB-UniRule"/>
</dbReference>
<dbReference type="GO" id="GO:0004300">
    <property type="term" value="F:enoyl-CoA hydratase activity"/>
    <property type="evidence" value="ECO:0007669"/>
    <property type="project" value="UniProtKB-UniRule"/>
</dbReference>
<dbReference type="GO" id="GO:0016509">
    <property type="term" value="F:long-chain-3-hydroxyacyl-CoA dehydrogenase activity"/>
    <property type="evidence" value="ECO:0007669"/>
    <property type="project" value="TreeGrafter"/>
</dbReference>
<dbReference type="GO" id="GO:0070403">
    <property type="term" value="F:NAD+ binding"/>
    <property type="evidence" value="ECO:0007669"/>
    <property type="project" value="InterPro"/>
</dbReference>
<dbReference type="GO" id="GO:0006635">
    <property type="term" value="P:fatty acid beta-oxidation"/>
    <property type="evidence" value="ECO:0007669"/>
    <property type="project" value="UniProtKB-UniRule"/>
</dbReference>
<dbReference type="CDD" id="cd06558">
    <property type="entry name" value="crotonase-like"/>
    <property type="match status" value="1"/>
</dbReference>
<dbReference type="FunFam" id="1.10.1040.50:FF:000003">
    <property type="entry name" value="Fatty acid oxidation complex subunit alpha"/>
    <property type="match status" value="1"/>
</dbReference>
<dbReference type="FunFam" id="3.90.226.10:FF:000011">
    <property type="entry name" value="Fatty acid oxidation complex subunit alpha"/>
    <property type="match status" value="1"/>
</dbReference>
<dbReference type="FunFam" id="3.40.50.720:FF:000009">
    <property type="entry name" value="Fatty oxidation complex, alpha subunit"/>
    <property type="match status" value="1"/>
</dbReference>
<dbReference type="Gene3D" id="1.10.1040.50">
    <property type="match status" value="1"/>
</dbReference>
<dbReference type="Gene3D" id="3.90.226.10">
    <property type="entry name" value="2-enoyl-CoA Hydratase, Chain A, domain 1"/>
    <property type="match status" value="1"/>
</dbReference>
<dbReference type="Gene3D" id="3.40.50.720">
    <property type="entry name" value="NAD(P)-binding Rossmann-like Domain"/>
    <property type="match status" value="1"/>
</dbReference>
<dbReference type="HAMAP" id="MF_01617">
    <property type="entry name" value="FadJ"/>
    <property type="match status" value="1"/>
</dbReference>
<dbReference type="InterPro" id="IPR006180">
    <property type="entry name" value="3-OHacyl-CoA_DH_CS"/>
</dbReference>
<dbReference type="InterPro" id="IPR006176">
    <property type="entry name" value="3-OHacyl-CoA_DH_NAD-bd"/>
</dbReference>
<dbReference type="InterPro" id="IPR006108">
    <property type="entry name" value="3HC_DH_C"/>
</dbReference>
<dbReference type="InterPro" id="IPR008927">
    <property type="entry name" value="6-PGluconate_DH-like_C_sf"/>
</dbReference>
<dbReference type="InterPro" id="IPR029045">
    <property type="entry name" value="ClpP/crotonase-like_dom_sf"/>
</dbReference>
<dbReference type="InterPro" id="IPR001753">
    <property type="entry name" value="Enoyl-CoA_hydra/iso"/>
</dbReference>
<dbReference type="InterPro" id="IPR050136">
    <property type="entry name" value="FA_oxidation_alpha_subunit"/>
</dbReference>
<dbReference type="InterPro" id="IPR012802">
    <property type="entry name" value="FadJ"/>
</dbReference>
<dbReference type="InterPro" id="IPR036291">
    <property type="entry name" value="NAD(P)-bd_dom_sf"/>
</dbReference>
<dbReference type="NCBIfam" id="TIGR02440">
    <property type="entry name" value="FadJ"/>
    <property type="match status" value="1"/>
</dbReference>
<dbReference type="NCBIfam" id="NF008363">
    <property type="entry name" value="PRK11154.1"/>
    <property type="match status" value="1"/>
</dbReference>
<dbReference type="PANTHER" id="PTHR43612">
    <property type="entry name" value="TRIFUNCTIONAL ENZYME SUBUNIT ALPHA"/>
    <property type="match status" value="1"/>
</dbReference>
<dbReference type="PANTHER" id="PTHR43612:SF3">
    <property type="entry name" value="TRIFUNCTIONAL ENZYME SUBUNIT ALPHA, MITOCHONDRIAL"/>
    <property type="match status" value="1"/>
</dbReference>
<dbReference type="Pfam" id="PF00725">
    <property type="entry name" value="3HCDH"/>
    <property type="match status" value="1"/>
</dbReference>
<dbReference type="Pfam" id="PF02737">
    <property type="entry name" value="3HCDH_N"/>
    <property type="match status" value="1"/>
</dbReference>
<dbReference type="Pfam" id="PF00378">
    <property type="entry name" value="ECH_1"/>
    <property type="match status" value="1"/>
</dbReference>
<dbReference type="SUPFAM" id="SSF48179">
    <property type="entry name" value="6-phosphogluconate dehydrogenase C-terminal domain-like"/>
    <property type="match status" value="2"/>
</dbReference>
<dbReference type="SUPFAM" id="SSF52096">
    <property type="entry name" value="ClpP/crotonase"/>
    <property type="match status" value="1"/>
</dbReference>
<dbReference type="SUPFAM" id="SSF51735">
    <property type="entry name" value="NAD(P)-binding Rossmann-fold domains"/>
    <property type="match status" value="1"/>
</dbReference>
<dbReference type="PROSITE" id="PS00067">
    <property type="entry name" value="3HCDH"/>
    <property type="match status" value="1"/>
</dbReference>
<organism>
    <name type="scientific">Salmonella newport (strain SL254)</name>
    <dbReference type="NCBI Taxonomy" id="423368"/>
    <lineage>
        <taxon>Bacteria</taxon>
        <taxon>Pseudomonadati</taxon>
        <taxon>Pseudomonadota</taxon>
        <taxon>Gammaproteobacteria</taxon>
        <taxon>Enterobacterales</taxon>
        <taxon>Enterobacteriaceae</taxon>
        <taxon>Salmonella</taxon>
    </lineage>
</organism>
<sequence>MTTTSAFMLNVRLDNVAVVAIDVPGEKVNTLKAEFAAQVRAILKQIRENKALQGVVFISAKADNFIAGADINMIGHCQNAQEAETLARQGQQLMAEIQALPVPVIAAIHGACLGGGLEMALACHRRICTDDVKTVLGLPEVQLGLLPGSGGTQRLPRLVGVSTALDMILTGKQLRARQALKAGLVDDVVPQTILLEAAVELAKKERLAQRTLPVRERILAGPLGRALLFRLVRKKTAQKTQGNYPATERIIDVIETGLAQGSSSGYDAEARAFGELAMTPQSQALRAVFFASTEVKKDPGSDAPPGPLNSVGILGGGLMGGGIAWVTACKGGLPVRIKDINTQGINHALKYSWDLLETKVRRRHIKASERDKQLALISGSTDYRGFSHRDLVIEAVFEDLPLKQQMVAEVEQNCATHTIFASNTSSLPIGDIAANAARPEQVIGLHFFSPVEKMPLVEVIPHASTSAQTIATTVKLAKKQGKTPIVVSDKAGFYVNRILAPYINEAIRMLTEGERVEHIDAALVKFGFPVGPIQLLDEVGIDTGTKIIPVLEAAYGERFSAPANVVASILNDDRKGRKNGRGFYLYGEKGRKSKKQVDPAIYKLIGVQGQSRLSAQQVAERCVMLMLNEAARCFDEKVIRSARDGDIGAVFGIGFPPFLGGPFRYMDALGPGEMVATLQRLAALYGPRYAPCEQLVRMAERREHFWTNGETDQGN</sequence>
<name>FADJ_SALNS</name>
<proteinExistence type="inferred from homology"/>
<evidence type="ECO:0000255" key="1">
    <source>
        <dbReference type="HAMAP-Rule" id="MF_01617"/>
    </source>
</evidence>
<gene>
    <name evidence="1" type="primary">fadJ</name>
    <name type="ordered locus">SNSL254_A2577</name>
</gene>
<feature type="chain" id="PRO_1000185952" description="Fatty acid oxidation complex subunit alpha">
    <location>
        <begin position="1"/>
        <end position="715"/>
    </location>
</feature>
<feature type="region of interest" description="Enoyl-CoA hydratase" evidence="1">
    <location>
        <begin position="1"/>
        <end position="190"/>
    </location>
</feature>
<feature type="region of interest" description="3-hydroxyacyl-CoA dehydrogenase" evidence="1">
    <location>
        <begin position="306"/>
        <end position="715"/>
    </location>
</feature>
<feature type="site" description="Important for catalytic activity" evidence="1">
    <location>
        <position position="118"/>
    </location>
</feature>
<feature type="site" description="Important for catalytic activity" evidence="1">
    <location>
        <position position="140"/>
    </location>
</feature>
<keyword id="KW-0963">Cytoplasm</keyword>
<keyword id="KW-0276">Fatty acid metabolism</keyword>
<keyword id="KW-0413">Isomerase</keyword>
<keyword id="KW-0442">Lipid degradation</keyword>
<keyword id="KW-0443">Lipid metabolism</keyword>
<keyword id="KW-0456">Lyase</keyword>
<keyword id="KW-0511">Multifunctional enzyme</keyword>
<keyword id="KW-0520">NAD</keyword>
<keyword id="KW-0560">Oxidoreductase</keyword>
<reference key="1">
    <citation type="journal article" date="2011" name="J. Bacteriol.">
        <title>Comparative genomics of 28 Salmonella enterica isolates: evidence for CRISPR-mediated adaptive sublineage evolution.</title>
        <authorList>
            <person name="Fricke W.F."/>
            <person name="Mammel M.K."/>
            <person name="McDermott P.F."/>
            <person name="Tartera C."/>
            <person name="White D.G."/>
            <person name="Leclerc J.E."/>
            <person name="Ravel J."/>
            <person name="Cebula T.A."/>
        </authorList>
    </citation>
    <scope>NUCLEOTIDE SEQUENCE [LARGE SCALE GENOMIC DNA]</scope>
    <source>
        <strain>SL254</strain>
    </source>
</reference>
<comment type="function">
    <text evidence="1">Catalyzes the formation of a hydroxyacyl-CoA by addition of water on enoyl-CoA. Also exhibits 3-hydroxyacyl-CoA epimerase and 3-hydroxyacyl-CoA dehydrogenase activities.</text>
</comment>
<comment type="catalytic activity">
    <reaction evidence="1">
        <text>a (3S)-3-hydroxyacyl-CoA = a (2E)-enoyl-CoA + H2O</text>
        <dbReference type="Rhea" id="RHEA:16105"/>
        <dbReference type="ChEBI" id="CHEBI:15377"/>
        <dbReference type="ChEBI" id="CHEBI:57318"/>
        <dbReference type="ChEBI" id="CHEBI:58856"/>
        <dbReference type="EC" id="4.2.1.17"/>
    </reaction>
</comment>
<comment type="catalytic activity">
    <reaction evidence="1">
        <text>a 4-saturated-(3S)-3-hydroxyacyl-CoA = a (3E)-enoyl-CoA + H2O</text>
        <dbReference type="Rhea" id="RHEA:20724"/>
        <dbReference type="ChEBI" id="CHEBI:15377"/>
        <dbReference type="ChEBI" id="CHEBI:58521"/>
        <dbReference type="ChEBI" id="CHEBI:137480"/>
        <dbReference type="EC" id="4.2.1.17"/>
    </reaction>
</comment>
<comment type="catalytic activity">
    <reaction evidence="1">
        <text>a (3S)-3-hydroxyacyl-CoA + NAD(+) = a 3-oxoacyl-CoA + NADH + H(+)</text>
        <dbReference type="Rhea" id="RHEA:22432"/>
        <dbReference type="ChEBI" id="CHEBI:15378"/>
        <dbReference type="ChEBI" id="CHEBI:57318"/>
        <dbReference type="ChEBI" id="CHEBI:57540"/>
        <dbReference type="ChEBI" id="CHEBI:57945"/>
        <dbReference type="ChEBI" id="CHEBI:90726"/>
        <dbReference type="EC" id="1.1.1.35"/>
    </reaction>
</comment>
<comment type="catalytic activity">
    <reaction evidence="1">
        <text>(3S)-3-hydroxybutanoyl-CoA = (3R)-3-hydroxybutanoyl-CoA</text>
        <dbReference type="Rhea" id="RHEA:21760"/>
        <dbReference type="ChEBI" id="CHEBI:57315"/>
        <dbReference type="ChEBI" id="CHEBI:57316"/>
        <dbReference type="EC" id="5.1.2.3"/>
    </reaction>
</comment>
<comment type="pathway">
    <text evidence="1">Lipid metabolism; fatty acid beta-oxidation.</text>
</comment>
<comment type="subunit">
    <text evidence="1">Heterotetramer of two alpha chains (FadJ) and two beta chains (FadI).</text>
</comment>
<comment type="subcellular location">
    <subcellularLocation>
        <location evidence="1">Cytoplasm</location>
    </subcellularLocation>
</comment>
<comment type="similarity">
    <text evidence="1">In the N-terminal section; belongs to the enoyl-CoA hydratase/isomerase family.</text>
</comment>
<comment type="similarity">
    <text evidence="1">In the central section; belongs to the 3-hydroxyacyl-CoA dehydrogenase family.</text>
</comment>
<protein>
    <recommendedName>
        <fullName evidence="1">Fatty acid oxidation complex subunit alpha</fullName>
    </recommendedName>
    <domain>
        <recommendedName>
            <fullName evidence="1">Enoyl-CoA hydratase/3-hydroxybutyryl-CoA epimerase</fullName>
            <ecNumber evidence="1">4.2.1.17</ecNumber>
            <ecNumber evidence="1">5.1.2.3</ecNumber>
        </recommendedName>
    </domain>
    <domain>
        <recommendedName>
            <fullName evidence="1">3-hydroxyacyl-CoA dehydrogenase</fullName>
            <ecNumber evidence="1">1.1.1.35</ecNumber>
        </recommendedName>
    </domain>
</protein>